<keyword id="KW-0227">DNA damage</keyword>
<keyword id="KW-0234">DNA repair</keyword>
<keyword id="KW-0235">DNA replication</keyword>
<keyword id="KW-0436">Ligase</keyword>
<keyword id="KW-0460">Magnesium</keyword>
<keyword id="KW-0464">Manganese</keyword>
<keyword id="KW-0479">Metal-binding</keyword>
<keyword id="KW-0520">NAD</keyword>
<keyword id="KW-0862">Zinc</keyword>
<name>DNLJ_YERPN</name>
<comment type="function">
    <text evidence="1">DNA ligase that catalyzes the formation of phosphodiester linkages between 5'-phosphoryl and 3'-hydroxyl groups in double-stranded DNA using NAD as a coenzyme and as the energy source for the reaction. It is essential for DNA replication and repair of damaged DNA.</text>
</comment>
<comment type="catalytic activity">
    <reaction evidence="1">
        <text>NAD(+) + (deoxyribonucleotide)n-3'-hydroxyl + 5'-phospho-(deoxyribonucleotide)m = (deoxyribonucleotide)n+m + AMP + beta-nicotinamide D-nucleotide.</text>
        <dbReference type="EC" id="6.5.1.2"/>
    </reaction>
</comment>
<comment type="cofactor">
    <cofactor evidence="1">
        <name>Mg(2+)</name>
        <dbReference type="ChEBI" id="CHEBI:18420"/>
    </cofactor>
    <cofactor evidence="1">
        <name>Mn(2+)</name>
        <dbReference type="ChEBI" id="CHEBI:29035"/>
    </cofactor>
</comment>
<comment type="similarity">
    <text evidence="1">Belongs to the NAD-dependent DNA ligase family. LigA subfamily.</text>
</comment>
<sequence length="670" mass="73898">MESIIQQINQLRTSLRHHEHQYHVLDAPEIPDAEYDRMMQQLRDLEAQHPELVTNDSPTQRVGAAPLDAFEQVKHEVPMLSLDNVFDEESYLAFDKRVHDRLKTAEPLTFCCELKLDGLAVSLLYENGELVRAATRGDGTTGENITANVRTIRAIPLRLHGDNVPRRVEVRGEVFMPQAGFEQLNEEARRKGGKVFANPRNAAAGSLRQLDPRITAKRPLTFFCYGVGLLDGGELPRSHIQCLMQFKAWGLPVSERVKLCTGSDQVIAFYRQIEQDRAGLGFDIDGVVIKVDDLALQEQLGFVARAPRWATAFKFPAQEQITQVREVEFQVGRTGAITPVARLEPVQVAGVIVSNATLHNADEIERLGLRIGDTVIVRRAGDVIPQVVGVVMEQRPDDTKEITFPSQCPVCGSDIERVEGEAVARCTGGLFCAAQRKEALKHFVSRRALDVDGMGDKIIEQLVEKQYVENPADLFQLTAGKLTGLDRMGPKSAQNLIAALEKAKQTTFARFLYALGIREVGEATAANLAAHFRTLDNLRAADIETLKSVPDVGEVVAKHVMNFLSEEHNQKVIEELEKVVSWPEPQQIVVEESDSPFAGKTVVLTGSLTILSRDEAKDRLTALGAKVSGSVSKKTHLVIAGEAAGSKLAKAQELGIKVIDEAEMIRLLGE</sequence>
<feature type="chain" id="PRO_0000313525" description="DNA ligase">
    <location>
        <begin position="1"/>
        <end position="670"/>
    </location>
</feature>
<feature type="domain" description="BRCT" evidence="1">
    <location>
        <begin position="592"/>
        <end position="670"/>
    </location>
</feature>
<feature type="active site" description="N6-AMP-lysine intermediate" evidence="1">
    <location>
        <position position="115"/>
    </location>
</feature>
<feature type="binding site" evidence="1">
    <location>
        <begin position="32"/>
        <end position="36"/>
    </location>
    <ligand>
        <name>NAD(+)</name>
        <dbReference type="ChEBI" id="CHEBI:57540"/>
    </ligand>
</feature>
<feature type="binding site" evidence="1">
    <location>
        <begin position="81"/>
        <end position="82"/>
    </location>
    <ligand>
        <name>NAD(+)</name>
        <dbReference type="ChEBI" id="CHEBI:57540"/>
    </ligand>
</feature>
<feature type="binding site" evidence="1">
    <location>
        <position position="113"/>
    </location>
    <ligand>
        <name>NAD(+)</name>
        <dbReference type="ChEBI" id="CHEBI:57540"/>
    </ligand>
</feature>
<feature type="binding site" evidence="1">
    <location>
        <position position="136"/>
    </location>
    <ligand>
        <name>NAD(+)</name>
        <dbReference type="ChEBI" id="CHEBI:57540"/>
    </ligand>
</feature>
<feature type="binding site" evidence="1">
    <location>
        <position position="173"/>
    </location>
    <ligand>
        <name>NAD(+)</name>
        <dbReference type="ChEBI" id="CHEBI:57540"/>
    </ligand>
</feature>
<feature type="binding site" evidence="1">
    <location>
        <position position="290"/>
    </location>
    <ligand>
        <name>NAD(+)</name>
        <dbReference type="ChEBI" id="CHEBI:57540"/>
    </ligand>
</feature>
<feature type="binding site" evidence="1">
    <location>
        <position position="314"/>
    </location>
    <ligand>
        <name>NAD(+)</name>
        <dbReference type="ChEBI" id="CHEBI:57540"/>
    </ligand>
</feature>
<feature type="binding site" evidence="1">
    <location>
        <position position="408"/>
    </location>
    <ligand>
        <name>Zn(2+)</name>
        <dbReference type="ChEBI" id="CHEBI:29105"/>
    </ligand>
</feature>
<feature type="binding site" evidence="1">
    <location>
        <position position="411"/>
    </location>
    <ligand>
        <name>Zn(2+)</name>
        <dbReference type="ChEBI" id="CHEBI:29105"/>
    </ligand>
</feature>
<feature type="binding site" evidence="1">
    <location>
        <position position="426"/>
    </location>
    <ligand>
        <name>Zn(2+)</name>
        <dbReference type="ChEBI" id="CHEBI:29105"/>
    </ligand>
</feature>
<feature type="binding site" evidence="1">
    <location>
        <position position="432"/>
    </location>
    <ligand>
        <name>Zn(2+)</name>
        <dbReference type="ChEBI" id="CHEBI:29105"/>
    </ligand>
</feature>
<accession>Q1CJV7</accession>
<accession>C4GS07</accession>
<organism>
    <name type="scientific">Yersinia pestis bv. Antiqua (strain Nepal516)</name>
    <dbReference type="NCBI Taxonomy" id="377628"/>
    <lineage>
        <taxon>Bacteria</taxon>
        <taxon>Pseudomonadati</taxon>
        <taxon>Pseudomonadota</taxon>
        <taxon>Gammaproteobacteria</taxon>
        <taxon>Enterobacterales</taxon>
        <taxon>Yersiniaceae</taxon>
        <taxon>Yersinia</taxon>
    </lineage>
</organism>
<dbReference type="EC" id="6.5.1.2" evidence="1"/>
<dbReference type="EMBL" id="CP000305">
    <property type="protein sequence ID" value="ABG17723.1"/>
    <property type="molecule type" value="Genomic_DNA"/>
</dbReference>
<dbReference type="EMBL" id="ACNQ01000009">
    <property type="protein sequence ID" value="EEO76817.1"/>
    <property type="molecule type" value="Genomic_DNA"/>
</dbReference>
<dbReference type="RefSeq" id="WP_002213368.1">
    <property type="nucleotide sequence ID" value="NZ_ACNQ01000009.1"/>
</dbReference>
<dbReference type="SMR" id="Q1CJV7"/>
<dbReference type="GeneID" id="57975709"/>
<dbReference type="KEGG" id="ypn:YPN_1393"/>
<dbReference type="HOGENOM" id="CLU_007764_2_1_6"/>
<dbReference type="Proteomes" id="UP000008936">
    <property type="component" value="Chromosome"/>
</dbReference>
<dbReference type="GO" id="GO:0005829">
    <property type="term" value="C:cytosol"/>
    <property type="evidence" value="ECO:0007669"/>
    <property type="project" value="TreeGrafter"/>
</dbReference>
<dbReference type="GO" id="GO:0003677">
    <property type="term" value="F:DNA binding"/>
    <property type="evidence" value="ECO:0007669"/>
    <property type="project" value="InterPro"/>
</dbReference>
<dbReference type="GO" id="GO:0003911">
    <property type="term" value="F:DNA ligase (NAD+) activity"/>
    <property type="evidence" value="ECO:0007669"/>
    <property type="project" value="UniProtKB-UniRule"/>
</dbReference>
<dbReference type="GO" id="GO:0046872">
    <property type="term" value="F:metal ion binding"/>
    <property type="evidence" value="ECO:0007669"/>
    <property type="project" value="UniProtKB-KW"/>
</dbReference>
<dbReference type="GO" id="GO:0006281">
    <property type="term" value="P:DNA repair"/>
    <property type="evidence" value="ECO:0007669"/>
    <property type="project" value="UniProtKB-KW"/>
</dbReference>
<dbReference type="GO" id="GO:0006260">
    <property type="term" value="P:DNA replication"/>
    <property type="evidence" value="ECO:0007669"/>
    <property type="project" value="UniProtKB-KW"/>
</dbReference>
<dbReference type="CDD" id="cd17748">
    <property type="entry name" value="BRCT_DNA_ligase_like"/>
    <property type="match status" value="1"/>
</dbReference>
<dbReference type="CDD" id="cd00114">
    <property type="entry name" value="LIGANc"/>
    <property type="match status" value="1"/>
</dbReference>
<dbReference type="FunFam" id="1.10.150.20:FF:000006">
    <property type="entry name" value="DNA ligase"/>
    <property type="match status" value="1"/>
</dbReference>
<dbReference type="FunFam" id="1.10.150.20:FF:000007">
    <property type="entry name" value="DNA ligase"/>
    <property type="match status" value="1"/>
</dbReference>
<dbReference type="FunFam" id="1.10.287.610:FF:000002">
    <property type="entry name" value="DNA ligase"/>
    <property type="match status" value="1"/>
</dbReference>
<dbReference type="FunFam" id="2.40.50.140:FF:000012">
    <property type="entry name" value="DNA ligase"/>
    <property type="match status" value="1"/>
</dbReference>
<dbReference type="FunFam" id="3.30.470.30:FF:000001">
    <property type="entry name" value="DNA ligase"/>
    <property type="match status" value="1"/>
</dbReference>
<dbReference type="FunFam" id="3.40.50.10190:FF:000004">
    <property type="entry name" value="DNA ligase"/>
    <property type="match status" value="1"/>
</dbReference>
<dbReference type="FunFam" id="6.20.10.30:FF:000001">
    <property type="entry name" value="DNA ligase"/>
    <property type="match status" value="1"/>
</dbReference>
<dbReference type="Gene3D" id="6.20.10.30">
    <property type="match status" value="1"/>
</dbReference>
<dbReference type="Gene3D" id="1.10.150.20">
    <property type="entry name" value="5' to 3' exonuclease, C-terminal subdomain"/>
    <property type="match status" value="2"/>
</dbReference>
<dbReference type="Gene3D" id="3.40.50.10190">
    <property type="entry name" value="BRCT domain"/>
    <property type="match status" value="1"/>
</dbReference>
<dbReference type="Gene3D" id="3.30.470.30">
    <property type="entry name" value="DNA ligase/mRNA capping enzyme"/>
    <property type="match status" value="1"/>
</dbReference>
<dbReference type="Gene3D" id="1.10.287.610">
    <property type="entry name" value="Helix hairpin bin"/>
    <property type="match status" value="1"/>
</dbReference>
<dbReference type="Gene3D" id="2.40.50.140">
    <property type="entry name" value="Nucleic acid-binding proteins"/>
    <property type="match status" value="1"/>
</dbReference>
<dbReference type="HAMAP" id="MF_01588">
    <property type="entry name" value="DNA_ligase_A"/>
    <property type="match status" value="1"/>
</dbReference>
<dbReference type="InterPro" id="IPR001357">
    <property type="entry name" value="BRCT_dom"/>
</dbReference>
<dbReference type="InterPro" id="IPR036420">
    <property type="entry name" value="BRCT_dom_sf"/>
</dbReference>
<dbReference type="InterPro" id="IPR041663">
    <property type="entry name" value="DisA/LigA_HHH"/>
</dbReference>
<dbReference type="InterPro" id="IPR001679">
    <property type="entry name" value="DNA_ligase"/>
</dbReference>
<dbReference type="InterPro" id="IPR018239">
    <property type="entry name" value="DNA_ligase_AS"/>
</dbReference>
<dbReference type="InterPro" id="IPR033136">
    <property type="entry name" value="DNA_ligase_CS"/>
</dbReference>
<dbReference type="InterPro" id="IPR013839">
    <property type="entry name" value="DNAligase_adenylation"/>
</dbReference>
<dbReference type="InterPro" id="IPR013840">
    <property type="entry name" value="DNAligase_N"/>
</dbReference>
<dbReference type="InterPro" id="IPR003583">
    <property type="entry name" value="Hlx-hairpin-Hlx_DNA-bd_motif"/>
</dbReference>
<dbReference type="InterPro" id="IPR012340">
    <property type="entry name" value="NA-bd_OB-fold"/>
</dbReference>
<dbReference type="InterPro" id="IPR004150">
    <property type="entry name" value="NAD_DNA_ligase_OB"/>
</dbReference>
<dbReference type="InterPro" id="IPR010994">
    <property type="entry name" value="RuvA_2-like"/>
</dbReference>
<dbReference type="InterPro" id="IPR004149">
    <property type="entry name" value="Znf_DNAligase_C4"/>
</dbReference>
<dbReference type="NCBIfam" id="TIGR00575">
    <property type="entry name" value="dnlj"/>
    <property type="match status" value="1"/>
</dbReference>
<dbReference type="NCBIfam" id="NF005932">
    <property type="entry name" value="PRK07956.1"/>
    <property type="match status" value="1"/>
</dbReference>
<dbReference type="PANTHER" id="PTHR23389">
    <property type="entry name" value="CHROMOSOME TRANSMISSION FIDELITY FACTOR 18"/>
    <property type="match status" value="1"/>
</dbReference>
<dbReference type="PANTHER" id="PTHR23389:SF9">
    <property type="entry name" value="DNA LIGASE"/>
    <property type="match status" value="1"/>
</dbReference>
<dbReference type="Pfam" id="PF00533">
    <property type="entry name" value="BRCT"/>
    <property type="match status" value="1"/>
</dbReference>
<dbReference type="Pfam" id="PF01653">
    <property type="entry name" value="DNA_ligase_aden"/>
    <property type="match status" value="1"/>
</dbReference>
<dbReference type="Pfam" id="PF03120">
    <property type="entry name" value="DNA_ligase_OB"/>
    <property type="match status" value="1"/>
</dbReference>
<dbReference type="Pfam" id="PF03119">
    <property type="entry name" value="DNA_ligase_ZBD"/>
    <property type="match status" value="1"/>
</dbReference>
<dbReference type="Pfam" id="PF12826">
    <property type="entry name" value="HHH_2"/>
    <property type="match status" value="1"/>
</dbReference>
<dbReference type="Pfam" id="PF14520">
    <property type="entry name" value="HHH_5"/>
    <property type="match status" value="1"/>
</dbReference>
<dbReference type="Pfam" id="PF22745">
    <property type="entry name" value="Nlig-Ia"/>
    <property type="match status" value="1"/>
</dbReference>
<dbReference type="PIRSF" id="PIRSF001604">
    <property type="entry name" value="LigA"/>
    <property type="match status" value="1"/>
</dbReference>
<dbReference type="SMART" id="SM00292">
    <property type="entry name" value="BRCT"/>
    <property type="match status" value="1"/>
</dbReference>
<dbReference type="SMART" id="SM00278">
    <property type="entry name" value="HhH1"/>
    <property type="match status" value="4"/>
</dbReference>
<dbReference type="SMART" id="SM00532">
    <property type="entry name" value="LIGANc"/>
    <property type="match status" value="1"/>
</dbReference>
<dbReference type="SUPFAM" id="SSF52113">
    <property type="entry name" value="BRCT domain"/>
    <property type="match status" value="1"/>
</dbReference>
<dbReference type="SUPFAM" id="SSF56091">
    <property type="entry name" value="DNA ligase/mRNA capping enzyme, catalytic domain"/>
    <property type="match status" value="1"/>
</dbReference>
<dbReference type="SUPFAM" id="SSF50249">
    <property type="entry name" value="Nucleic acid-binding proteins"/>
    <property type="match status" value="1"/>
</dbReference>
<dbReference type="SUPFAM" id="SSF47781">
    <property type="entry name" value="RuvA domain 2-like"/>
    <property type="match status" value="1"/>
</dbReference>
<dbReference type="PROSITE" id="PS50172">
    <property type="entry name" value="BRCT"/>
    <property type="match status" value="1"/>
</dbReference>
<dbReference type="PROSITE" id="PS01055">
    <property type="entry name" value="DNA_LIGASE_N1"/>
    <property type="match status" value="1"/>
</dbReference>
<dbReference type="PROSITE" id="PS01056">
    <property type="entry name" value="DNA_LIGASE_N2"/>
    <property type="match status" value="1"/>
</dbReference>
<proteinExistence type="inferred from homology"/>
<reference key="1">
    <citation type="journal article" date="2006" name="J. Bacteriol.">
        <title>Complete genome sequence of Yersinia pestis strains Antiqua and Nepal516: evidence of gene reduction in an emerging pathogen.</title>
        <authorList>
            <person name="Chain P.S.G."/>
            <person name="Hu P."/>
            <person name="Malfatti S.A."/>
            <person name="Radnedge L."/>
            <person name="Larimer F."/>
            <person name="Vergez L.M."/>
            <person name="Worsham P."/>
            <person name="Chu M.C."/>
            <person name="Andersen G.L."/>
        </authorList>
    </citation>
    <scope>NUCLEOTIDE SEQUENCE [LARGE SCALE GENOMIC DNA]</scope>
    <source>
        <strain>Nepal516</strain>
    </source>
</reference>
<reference key="2">
    <citation type="submission" date="2009-04" db="EMBL/GenBank/DDBJ databases">
        <title>Yersinia pestis Nepal516A whole genome shotgun sequencing project.</title>
        <authorList>
            <person name="Plunkett G. III"/>
            <person name="Anderson B.D."/>
            <person name="Baumler D.J."/>
            <person name="Burland V."/>
            <person name="Cabot E.L."/>
            <person name="Glasner J.D."/>
            <person name="Mau B."/>
            <person name="Neeno-Eckwall E."/>
            <person name="Perna N.T."/>
            <person name="Munk A.C."/>
            <person name="Tapia R."/>
            <person name="Green L.D."/>
            <person name="Rogers Y.C."/>
            <person name="Detter J.C."/>
            <person name="Bruce D.C."/>
            <person name="Brettin T.S."/>
        </authorList>
    </citation>
    <scope>NUCLEOTIDE SEQUENCE [LARGE SCALE GENOMIC DNA]</scope>
    <source>
        <strain>Nepal516</strain>
    </source>
</reference>
<protein>
    <recommendedName>
        <fullName evidence="1">DNA ligase</fullName>
        <ecNumber evidence="1">6.5.1.2</ecNumber>
    </recommendedName>
    <alternativeName>
        <fullName evidence="1">Polydeoxyribonucleotide synthase [NAD(+)]</fullName>
    </alternativeName>
</protein>
<gene>
    <name evidence="1" type="primary">ligA</name>
    <name type="ordered locus">YPN_1393</name>
    <name type="ORF">YP516_1537</name>
</gene>
<evidence type="ECO:0000255" key="1">
    <source>
        <dbReference type="HAMAP-Rule" id="MF_01588"/>
    </source>
</evidence>